<accession>Q8F3W3</accession>
<evidence type="ECO:0000255" key="1">
    <source>
        <dbReference type="HAMAP-Rule" id="MF_00494"/>
    </source>
</evidence>
<gene>
    <name evidence="1" type="primary">tal</name>
    <name type="ordered locus">LA_2286</name>
</gene>
<sequence length="214" mass="23490">MELYLDTANVDEIKEIASYGLVDGVTTNPSLIAKSGRSFKEVIKEICSIVSGPVSAEVLSTKFDGMMKEALELVEIAENVVIKVPLIPEGLKTVVELTKRNIPTNVTLCFSAPQALLAAKAGATFISPFIGRVDDTSWDGMELISEIREIYDNYGYDTRILAASIRGPIHLKESALRGADCATMPHSAFLQLFKHPLTDIGLEKFLEDSKKLKW</sequence>
<organism>
    <name type="scientific">Leptospira interrogans serogroup Icterohaemorrhagiae serovar Lai (strain 56601)</name>
    <dbReference type="NCBI Taxonomy" id="189518"/>
    <lineage>
        <taxon>Bacteria</taxon>
        <taxon>Pseudomonadati</taxon>
        <taxon>Spirochaetota</taxon>
        <taxon>Spirochaetia</taxon>
        <taxon>Leptospirales</taxon>
        <taxon>Leptospiraceae</taxon>
        <taxon>Leptospira</taxon>
    </lineage>
</organism>
<dbReference type="EC" id="2.2.1.2" evidence="1"/>
<dbReference type="EMBL" id="AE010300">
    <property type="protein sequence ID" value="AAN49485.1"/>
    <property type="molecule type" value="Genomic_DNA"/>
</dbReference>
<dbReference type="RefSeq" id="NP_712467.1">
    <property type="nucleotide sequence ID" value="NC_004342.2"/>
</dbReference>
<dbReference type="SMR" id="Q8F3W3"/>
<dbReference type="FunCoup" id="Q8F3W3">
    <property type="interactions" value="208"/>
</dbReference>
<dbReference type="STRING" id="189518.LA_2286"/>
<dbReference type="PaxDb" id="189518-LA_2286"/>
<dbReference type="EnsemblBacteria" id="AAN49485">
    <property type="protein sequence ID" value="AAN49485"/>
    <property type="gene ID" value="LA_2286"/>
</dbReference>
<dbReference type="KEGG" id="lil:LA_2286"/>
<dbReference type="PATRIC" id="fig|189518.3.peg.2272"/>
<dbReference type="HOGENOM" id="CLU_079764_0_0_12"/>
<dbReference type="InParanoid" id="Q8F3W3"/>
<dbReference type="OrthoDB" id="9807051at2"/>
<dbReference type="UniPathway" id="UPA00115">
    <property type="reaction ID" value="UER00414"/>
</dbReference>
<dbReference type="PRO" id="PR:Q8F3W3"/>
<dbReference type="Proteomes" id="UP000001408">
    <property type="component" value="Chromosome I"/>
</dbReference>
<dbReference type="GO" id="GO:0005737">
    <property type="term" value="C:cytoplasm"/>
    <property type="evidence" value="ECO:0007669"/>
    <property type="project" value="UniProtKB-SubCell"/>
</dbReference>
<dbReference type="GO" id="GO:0016832">
    <property type="term" value="F:aldehyde-lyase activity"/>
    <property type="evidence" value="ECO:0007669"/>
    <property type="project" value="InterPro"/>
</dbReference>
<dbReference type="GO" id="GO:0004801">
    <property type="term" value="F:transaldolase activity"/>
    <property type="evidence" value="ECO:0007669"/>
    <property type="project" value="UniProtKB-UniRule"/>
</dbReference>
<dbReference type="GO" id="GO:0005975">
    <property type="term" value="P:carbohydrate metabolic process"/>
    <property type="evidence" value="ECO:0007669"/>
    <property type="project" value="InterPro"/>
</dbReference>
<dbReference type="GO" id="GO:0006098">
    <property type="term" value="P:pentose-phosphate shunt"/>
    <property type="evidence" value="ECO:0007669"/>
    <property type="project" value="UniProtKB-UniRule"/>
</dbReference>
<dbReference type="CDD" id="cd00956">
    <property type="entry name" value="Transaldolase_FSA"/>
    <property type="match status" value="1"/>
</dbReference>
<dbReference type="FunFam" id="3.20.20.70:FF:000018">
    <property type="entry name" value="Probable transaldolase"/>
    <property type="match status" value="1"/>
</dbReference>
<dbReference type="Gene3D" id="3.20.20.70">
    <property type="entry name" value="Aldolase class I"/>
    <property type="match status" value="1"/>
</dbReference>
<dbReference type="HAMAP" id="MF_00494">
    <property type="entry name" value="Transaldolase_3b"/>
    <property type="match status" value="1"/>
</dbReference>
<dbReference type="InterPro" id="IPR013785">
    <property type="entry name" value="Aldolase_TIM"/>
</dbReference>
<dbReference type="InterPro" id="IPR001585">
    <property type="entry name" value="TAL/FSA"/>
</dbReference>
<dbReference type="InterPro" id="IPR022999">
    <property type="entry name" value="Transaldolase_3B"/>
</dbReference>
<dbReference type="InterPro" id="IPR004731">
    <property type="entry name" value="Transaldolase_3B/F6P_aldolase"/>
</dbReference>
<dbReference type="InterPro" id="IPR018225">
    <property type="entry name" value="Transaldolase_AS"/>
</dbReference>
<dbReference type="InterPro" id="IPR033919">
    <property type="entry name" value="TSA/FSA_arc/bac"/>
</dbReference>
<dbReference type="NCBIfam" id="TIGR00875">
    <property type="entry name" value="fsa_talC_mipB"/>
    <property type="match status" value="1"/>
</dbReference>
<dbReference type="PANTHER" id="PTHR10683:SF40">
    <property type="entry name" value="FRUCTOSE-6-PHOSPHATE ALDOLASE 1-RELATED"/>
    <property type="match status" value="1"/>
</dbReference>
<dbReference type="PANTHER" id="PTHR10683">
    <property type="entry name" value="TRANSALDOLASE"/>
    <property type="match status" value="1"/>
</dbReference>
<dbReference type="Pfam" id="PF00923">
    <property type="entry name" value="TAL_FSA"/>
    <property type="match status" value="1"/>
</dbReference>
<dbReference type="SUPFAM" id="SSF51569">
    <property type="entry name" value="Aldolase"/>
    <property type="match status" value="1"/>
</dbReference>
<dbReference type="PROSITE" id="PS01054">
    <property type="entry name" value="TRANSALDOLASE_1"/>
    <property type="match status" value="1"/>
</dbReference>
<comment type="function">
    <text evidence="1">Transaldolase is important for the balance of metabolites in the pentose-phosphate pathway.</text>
</comment>
<comment type="catalytic activity">
    <reaction evidence="1">
        <text>D-sedoheptulose 7-phosphate + D-glyceraldehyde 3-phosphate = D-erythrose 4-phosphate + beta-D-fructose 6-phosphate</text>
        <dbReference type="Rhea" id="RHEA:17053"/>
        <dbReference type="ChEBI" id="CHEBI:16897"/>
        <dbReference type="ChEBI" id="CHEBI:57483"/>
        <dbReference type="ChEBI" id="CHEBI:57634"/>
        <dbReference type="ChEBI" id="CHEBI:59776"/>
        <dbReference type="EC" id="2.2.1.2"/>
    </reaction>
</comment>
<comment type="pathway">
    <text evidence="1">Carbohydrate degradation; pentose phosphate pathway; D-glyceraldehyde 3-phosphate and beta-D-fructose 6-phosphate from D-ribose 5-phosphate and D-xylulose 5-phosphate (non-oxidative stage): step 2/3.</text>
</comment>
<comment type="subcellular location">
    <subcellularLocation>
        <location evidence="1">Cytoplasm</location>
    </subcellularLocation>
</comment>
<comment type="similarity">
    <text evidence="1">Belongs to the transaldolase family. Type 3B subfamily.</text>
</comment>
<protein>
    <recommendedName>
        <fullName evidence="1">Probable transaldolase</fullName>
        <ecNumber evidence="1">2.2.1.2</ecNumber>
    </recommendedName>
</protein>
<reference key="1">
    <citation type="journal article" date="2003" name="Nature">
        <title>Unique physiological and pathogenic features of Leptospira interrogans revealed by whole-genome sequencing.</title>
        <authorList>
            <person name="Ren S.-X."/>
            <person name="Fu G."/>
            <person name="Jiang X.-G."/>
            <person name="Zeng R."/>
            <person name="Miao Y.-G."/>
            <person name="Xu H."/>
            <person name="Zhang Y.-X."/>
            <person name="Xiong H."/>
            <person name="Lu G."/>
            <person name="Lu L.-F."/>
            <person name="Jiang H.-Q."/>
            <person name="Jia J."/>
            <person name="Tu Y.-F."/>
            <person name="Jiang J.-X."/>
            <person name="Gu W.-Y."/>
            <person name="Zhang Y.-Q."/>
            <person name="Cai Z."/>
            <person name="Sheng H.-H."/>
            <person name="Yin H.-F."/>
            <person name="Zhang Y."/>
            <person name="Zhu G.-F."/>
            <person name="Wan M."/>
            <person name="Huang H.-L."/>
            <person name="Qian Z."/>
            <person name="Wang S.-Y."/>
            <person name="Ma W."/>
            <person name="Yao Z.-J."/>
            <person name="Shen Y."/>
            <person name="Qiang B.-Q."/>
            <person name="Xia Q.-C."/>
            <person name="Guo X.-K."/>
            <person name="Danchin A."/>
            <person name="Saint Girons I."/>
            <person name="Somerville R.L."/>
            <person name="Wen Y.-M."/>
            <person name="Shi M.-H."/>
            <person name="Chen Z."/>
            <person name="Xu J.-G."/>
            <person name="Zhao G.-P."/>
        </authorList>
    </citation>
    <scope>NUCLEOTIDE SEQUENCE [LARGE SCALE GENOMIC DNA]</scope>
    <source>
        <strain>56601</strain>
    </source>
</reference>
<name>TAL_LEPIN</name>
<feature type="chain" id="PRO_0000173670" description="Probable transaldolase">
    <location>
        <begin position="1"/>
        <end position="214"/>
    </location>
</feature>
<feature type="active site" description="Schiff-base intermediate with substrate" evidence="1">
    <location>
        <position position="83"/>
    </location>
</feature>
<proteinExistence type="inferred from homology"/>
<keyword id="KW-0963">Cytoplasm</keyword>
<keyword id="KW-0570">Pentose shunt</keyword>
<keyword id="KW-1185">Reference proteome</keyword>
<keyword id="KW-0704">Schiff base</keyword>
<keyword id="KW-0808">Transferase</keyword>